<name>SYH_PSEP1</name>
<feature type="chain" id="PRO_1000016422" description="Histidine--tRNA ligase">
    <location>
        <begin position="1"/>
        <end position="429"/>
    </location>
</feature>
<reference key="1">
    <citation type="submission" date="2007-05" db="EMBL/GenBank/DDBJ databases">
        <title>Complete sequence of Pseudomonas putida F1.</title>
        <authorList>
            <consortium name="US DOE Joint Genome Institute"/>
            <person name="Copeland A."/>
            <person name="Lucas S."/>
            <person name="Lapidus A."/>
            <person name="Barry K."/>
            <person name="Detter J.C."/>
            <person name="Glavina del Rio T."/>
            <person name="Hammon N."/>
            <person name="Israni S."/>
            <person name="Dalin E."/>
            <person name="Tice H."/>
            <person name="Pitluck S."/>
            <person name="Chain P."/>
            <person name="Malfatti S."/>
            <person name="Shin M."/>
            <person name="Vergez L."/>
            <person name="Schmutz J."/>
            <person name="Larimer F."/>
            <person name="Land M."/>
            <person name="Hauser L."/>
            <person name="Kyrpides N."/>
            <person name="Lykidis A."/>
            <person name="Parales R."/>
            <person name="Richardson P."/>
        </authorList>
    </citation>
    <scope>NUCLEOTIDE SEQUENCE [LARGE SCALE GENOMIC DNA]</scope>
    <source>
        <strain>ATCC 700007 / DSM 6899 / JCM 31910 / BCRC 17059 / LMG 24140 / F1</strain>
    </source>
</reference>
<proteinExistence type="inferred from homology"/>
<sequence>MSKSLQAIRGMNDILPEQSPLWRYFEGTVAGLLDTYGYSQIRTPIVEFTELFKRSIGEVTDIVEKEMYTFEDRNGDSLTLRPEGTAACVRAVLEHGITGNGQVQKLWYIGQMFRHERPQKGRYRQFHQIGVEVFNLDGPDIDAELIMLTWRLWGLLGIQDAVKLELNSLGTSEARARYRDALVEFLSARLEQLDEDSQRRLKSNPLRILDSKDQNTQAVLVGAPKLEDYLDEESRVHFEGLKARLDAAGIPFVINTKLVRGLDYYSKTVFEWVTDKLGAQGTVCAGGRYDGLVEQMGGKPTTGVGFAMGIERLILLLETLGKVPESISRQIDVYLCAFGEQAELAGLRLSEGLRDRLPGLRLAVNAGGGSFKSQFKKADKSGALFALILGDDELAKQEIGLKPLRGQGEQQNIAWDALAEHLETAIAQA</sequence>
<gene>
    <name evidence="1" type="primary">hisS</name>
    <name type="ordered locus">Pput_0884</name>
</gene>
<accession>A5VYT6</accession>
<dbReference type="EC" id="6.1.1.21" evidence="1"/>
<dbReference type="EMBL" id="CP000712">
    <property type="protein sequence ID" value="ABQ77046.1"/>
    <property type="molecule type" value="Genomic_DNA"/>
</dbReference>
<dbReference type="SMR" id="A5VYT6"/>
<dbReference type="KEGG" id="ppf:Pput_0884"/>
<dbReference type="eggNOG" id="COG0124">
    <property type="taxonomic scope" value="Bacteria"/>
</dbReference>
<dbReference type="HOGENOM" id="CLU_025113_1_1_6"/>
<dbReference type="GO" id="GO:0005737">
    <property type="term" value="C:cytoplasm"/>
    <property type="evidence" value="ECO:0007669"/>
    <property type="project" value="UniProtKB-SubCell"/>
</dbReference>
<dbReference type="GO" id="GO:0005524">
    <property type="term" value="F:ATP binding"/>
    <property type="evidence" value="ECO:0007669"/>
    <property type="project" value="UniProtKB-UniRule"/>
</dbReference>
<dbReference type="GO" id="GO:0004821">
    <property type="term" value="F:histidine-tRNA ligase activity"/>
    <property type="evidence" value="ECO:0007669"/>
    <property type="project" value="UniProtKB-UniRule"/>
</dbReference>
<dbReference type="GO" id="GO:0006427">
    <property type="term" value="P:histidyl-tRNA aminoacylation"/>
    <property type="evidence" value="ECO:0007669"/>
    <property type="project" value="UniProtKB-UniRule"/>
</dbReference>
<dbReference type="CDD" id="cd00773">
    <property type="entry name" value="HisRS-like_core"/>
    <property type="match status" value="1"/>
</dbReference>
<dbReference type="CDD" id="cd00859">
    <property type="entry name" value="HisRS_anticodon"/>
    <property type="match status" value="1"/>
</dbReference>
<dbReference type="FunFam" id="3.30.930.10:FF:000005">
    <property type="entry name" value="Histidine--tRNA ligase"/>
    <property type="match status" value="1"/>
</dbReference>
<dbReference type="Gene3D" id="3.40.50.800">
    <property type="entry name" value="Anticodon-binding domain"/>
    <property type="match status" value="1"/>
</dbReference>
<dbReference type="Gene3D" id="3.30.930.10">
    <property type="entry name" value="Bira Bifunctional Protein, Domain 2"/>
    <property type="match status" value="1"/>
</dbReference>
<dbReference type="HAMAP" id="MF_00127">
    <property type="entry name" value="His_tRNA_synth"/>
    <property type="match status" value="1"/>
</dbReference>
<dbReference type="InterPro" id="IPR006195">
    <property type="entry name" value="aa-tRNA-synth_II"/>
</dbReference>
<dbReference type="InterPro" id="IPR045864">
    <property type="entry name" value="aa-tRNA-synth_II/BPL/LPL"/>
</dbReference>
<dbReference type="InterPro" id="IPR004154">
    <property type="entry name" value="Anticodon-bd"/>
</dbReference>
<dbReference type="InterPro" id="IPR036621">
    <property type="entry name" value="Anticodon-bd_dom_sf"/>
</dbReference>
<dbReference type="InterPro" id="IPR015807">
    <property type="entry name" value="His-tRNA-ligase"/>
</dbReference>
<dbReference type="InterPro" id="IPR041715">
    <property type="entry name" value="HisRS-like_core"/>
</dbReference>
<dbReference type="InterPro" id="IPR004516">
    <property type="entry name" value="HisRS/HisZ"/>
</dbReference>
<dbReference type="InterPro" id="IPR033656">
    <property type="entry name" value="HisRS_anticodon"/>
</dbReference>
<dbReference type="NCBIfam" id="TIGR00442">
    <property type="entry name" value="hisS"/>
    <property type="match status" value="1"/>
</dbReference>
<dbReference type="PANTHER" id="PTHR43707:SF1">
    <property type="entry name" value="HISTIDINE--TRNA LIGASE, MITOCHONDRIAL-RELATED"/>
    <property type="match status" value="1"/>
</dbReference>
<dbReference type="PANTHER" id="PTHR43707">
    <property type="entry name" value="HISTIDYL-TRNA SYNTHETASE"/>
    <property type="match status" value="1"/>
</dbReference>
<dbReference type="Pfam" id="PF03129">
    <property type="entry name" value="HGTP_anticodon"/>
    <property type="match status" value="1"/>
</dbReference>
<dbReference type="Pfam" id="PF13393">
    <property type="entry name" value="tRNA-synt_His"/>
    <property type="match status" value="1"/>
</dbReference>
<dbReference type="PIRSF" id="PIRSF001549">
    <property type="entry name" value="His-tRNA_synth"/>
    <property type="match status" value="1"/>
</dbReference>
<dbReference type="SUPFAM" id="SSF52954">
    <property type="entry name" value="Class II aaRS ABD-related"/>
    <property type="match status" value="1"/>
</dbReference>
<dbReference type="SUPFAM" id="SSF55681">
    <property type="entry name" value="Class II aaRS and biotin synthetases"/>
    <property type="match status" value="1"/>
</dbReference>
<dbReference type="PROSITE" id="PS50862">
    <property type="entry name" value="AA_TRNA_LIGASE_II"/>
    <property type="match status" value="1"/>
</dbReference>
<comment type="catalytic activity">
    <reaction evidence="1">
        <text>tRNA(His) + L-histidine + ATP = L-histidyl-tRNA(His) + AMP + diphosphate + H(+)</text>
        <dbReference type="Rhea" id="RHEA:17313"/>
        <dbReference type="Rhea" id="RHEA-COMP:9665"/>
        <dbReference type="Rhea" id="RHEA-COMP:9689"/>
        <dbReference type="ChEBI" id="CHEBI:15378"/>
        <dbReference type="ChEBI" id="CHEBI:30616"/>
        <dbReference type="ChEBI" id="CHEBI:33019"/>
        <dbReference type="ChEBI" id="CHEBI:57595"/>
        <dbReference type="ChEBI" id="CHEBI:78442"/>
        <dbReference type="ChEBI" id="CHEBI:78527"/>
        <dbReference type="ChEBI" id="CHEBI:456215"/>
        <dbReference type="EC" id="6.1.1.21"/>
    </reaction>
</comment>
<comment type="subunit">
    <text evidence="1">Homodimer.</text>
</comment>
<comment type="subcellular location">
    <subcellularLocation>
        <location evidence="1">Cytoplasm</location>
    </subcellularLocation>
</comment>
<comment type="similarity">
    <text evidence="1">Belongs to the class-II aminoacyl-tRNA synthetase family.</text>
</comment>
<organism>
    <name type="scientific">Pseudomonas putida (strain ATCC 700007 / DSM 6899 / JCM 31910 / BCRC 17059 / LMG 24140 / F1)</name>
    <dbReference type="NCBI Taxonomy" id="351746"/>
    <lineage>
        <taxon>Bacteria</taxon>
        <taxon>Pseudomonadati</taxon>
        <taxon>Pseudomonadota</taxon>
        <taxon>Gammaproteobacteria</taxon>
        <taxon>Pseudomonadales</taxon>
        <taxon>Pseudomonadaceae</taxon>
        <taxon>Pseudomonas</taxon>
    </lineage>
</organism>
<protein>
    <recommendedName>
        <fullName evidence="1">Histidine--tRNA ligase</fullName>
        <ecNumber evidence="1">6.1.1.21</ecNumber>
    </recommendedName>
    <alternativeName>
        <fullName evidence="1">Histidyl-tRNA synthetase</fullName>
        <shortName evidence="1">HisRS</shortName>
    </alternativeName>
</protein>
<keyword id="KW-0030">Aminoacyl-tRNA synthetase</keyword>
<keyword id="KW-0067">ATP-binding</keyword>
<keyword id="KW-0963">Cytoplasm</keyword>
<keyword id="KW-0436">Ligase</keyword>
<keyword id="KW-0547">Nucleotide-binding</keyword>
<keyword id="KW-0648">Protein biosynthesis</keyword>
<evidence type="ECO:0000255" key="1">
    <source>
        <dbReference type="HAMAP-Rule" id="MF_00127"/>
    </source>
</evidence>